<name>PUP22_ARATH</name>
<organism>
    <name type="scientific">Arabidopsis thaliana</name>
    <name type="common">Mouse-ear cress</name>
    <dbReference type="NCBI Taxonomy" id="3702"/>
    <lineage>
        <taxon>Eukaryota</taxon>
        <taxon>Viridiplantae</taxon>
        <taxon>Streptophyta</taxon>
        <taxon>Embryophyta</taxon>
        <taxon>Tracheophyta</taxon>
        <taxon>Spermatophyta</taxon>
        <taxon>Magnoliopsida</taxon>
        <taxon>eudicotyledons</taxon>
        <taxon>Gunneridae</taxon>
        <taxon>Pentapetalae</taxon>
        <taxon>rosids</taxon>
        <taxon>malvids</taxon>
        <taxon>Brassicales</taxon>
        <taxon>Brassicaceae</taxon>
        <taxon>Camelineae</taxon>
        <taxon>Arabidopsis</taxon>
    </lineage>
</organism>
<sequence>MGISQVHYCNGDQNLEANLLDHEETESFSVPQTKNCKRWLRVSIYAIFVIFCQPLATVLGRLYYENGGKSTYVVTLLQLIGFPVLILFRFFSRIRQPKSTDTNFSQSPSFTTLASVYLCTGLLVSAYAYLSAVGLLYLPVSTFSLILASQLAFTAFFSYFLNSQKFTPLIVNSLFLLTVSSALLVVNTDSENTTNVSRVQYVIGFICTIGASAGIGLVLSLIQLLFRKVFTKHTSSAVLDLANYQSLVATCVVLIGLFASGEWRTLPSEMRNYKLGKVSYILTLASAAIFWQVYTVGCVGLIFESSSVFSNSITAVGLPIVPVVAVIVFHDKMDASKIFSIILAIWGFLSFVYQHYLDEKKLKTCQTKPVEEETQTL</sequence>
<feature type="chain" id="PRO_0000317408" description="Probable purine permease 22">
    <location>
        <begin position="1"/>
        <end position="377"/>
    </location>
</feature>
<feature type="transmembrane region" description="Helical" evidence="1">
    <location>
        <begin position="39"/>
        <end position="59"/>
    </location>
</feature>
<feature type="transmembrane region" description="Helical" evidence="1">
    <location>
        <begin position="71"/>
        <end position="91"/>
    </location>
</feature>
<feature type="transmembrane region" description="Helical" evidence="1">
    <location>
        <begin position="107"/>
        <end position="127"/>
    </location>
</feature>
<feature type="transmembrane region" description="Helical" evidence="1">
    <location>
        <begin position="128"/>
        <end position="148"/>
    </location>
</feature>
<feature type="transmembrane region" description="Helical" evidence="1">
    <location>
        <begin position="166"/>
        <end position="186"/>
    </location>
</feature>
<feature type="transmembrane region" description="Helical" evidence="1">
    <location>
        <begin position="202"/>
        <end position="222"/>
    </location>
</feature>
<feature type="transmembrane region" description="Helical" evidence="1">
    <location>
        <begin position="238"/>
        <end position="258"/>
    </location>
</feature>
<feature type="transmembrane region" description="Helical" evidence="1">
    <location>
        <begin position="283"/>
        <end position="303"/>
    </location>
</feature>
<feature type="transmembrane region" description="Helical" evidence="1">
    <location>
        <begin position="309"/>
        <end position="329"/>
    </location>
</feature>
<feature type="transmembrane region" description="Helical" evidence="1">
    <location>
        <begin position="338"/>
        <end position="358"/>
    </location>
</feature>
<gene>
    <name type="primary">PUP22</name>
    <name type="ordered locus">At4g18205</name>
    <name type="ORF">T9A21.50</name>
</gene>
<comment type="subcellular location">
    <subcellularLocation>
        <location evidence="2">Membrane</location>
        <topology evidence="2">Multi-pass membrane protein</topology>
    </subcellularLocation>
</comment>
<comment type="similarity">
    <text evidence="2">Belongs to the purine permeases (TC 2.A.7.14) family.</text>
</comment>
<comment type="sequence caution" evidence="2">
    <conflict type="erroneous gene model prediction">
        <sequence resource="EMBL-CDS" id="CAA16792"/>
    </conflict>
    <text>The predicted gene At4g18200 has been split into 3 genes: At4g18195, At4g18197 and At4g18205.</text>
</comment>
<comment type="sequence caution" evidence="2">
    <conflict type="erroneous gene model prediction">
        <sequence resource="EMBL-CDS" id="CAB78822"/>
    </conflict>
    <text>The predicted gene At4g18200 has been split into 3 genes: At4g18195, At4g18197 and At4g18205.</text>
</comment>
<proteinExistence type="evidence at transcript level"/>
<protein>
    <recommendedName>
        <fullName>Probable purine permease 22</fullName>
        <shortName>AtPUP22</shortName>
    </recommendedName>
</protein>
<accession>Q8RY74</accession>
<accession>O49724</accession>
<dbReference type="EMBL" id="AL021713">
    <property type="protein sequence ID" value="CAA16792.1"/>
    <property type="status" value="ALT_SEQ"/>
    <property type="molecule type" value="Genomic_DNA"/>
</dbReference>
<dbReference type="EMBL" id="AL161548">
    <property type="protein sequence ID" value="CAB78822.1"/>
    <property type="status" value="ALT_SEQ"/>
    <property type="molecule type" value="Genomic_DNA"/>
</dbReference>
<dbReference type="EMBL" id="CP002687">
    <property type="protein sequence ID" value="AEE84011.1"/>
    <property type="molecule type" value="Genomic_DNA"/>
</dbReference>
<dbReference type="EMBL" id="AY074546">
    <property type="protein sequence ID" value="AAL69512.1"/>
    <property type="molecule type" value="mRNA"/>
</dbReference>
<dbReference type="EMBL" id="AY096558">
    <property type="protein sequence ID" value="AAM20208.1"/>
    <property type="molecule type" value="mRNA"/>
</dbReference>
<dbReference type="RefSeq" id="NP_001031664.1">
    <property type="nucleotide sequence ID" value="NM_001036587.3"/>
</dbReference>
<dbReference type="SMR" id="Q8RY74"/>
<dbReference type="BioGRID" id="530665">
    <property type="interactions" value="17"/>
</dbReference>
<dbReference type="FunCoup" id="Q8RY74">
    <property type="interactions" value="9"/>
</dbReference>
<dbReference type="IntAct" id="Q8RY74">
    <property type="interactions" value="14"/>
</dbReference>
<dbReference type="STRING" id="3702.Q8RY74"/>
<dbReference type="iPTMnet" id="Q8RY74"/>
<dbReference type="PaxDb" id="3702-AT4G18205.1"/>
<dbReference type="ProteomicsDB" id="226117"/>
<dbReference type="EnsemblPlants" id="AT4G18205.1">
    <property type="protein sequence ID" value="AT4G18205.1"/>
    <property type="gene ID" value="AT4G18205"/>
</dbReference>
<dbReference type="GeneID" id="3770304"/>
<dbReference type="Gramene" id="AT4G18205.1">
    <property type="protein sequence ID" value="AT4G18205.1"/>
    <property type="gene ID" value="AT4G18205"/>
</dbReference>
<dbReference type="KEGG" id="ath:AT4G18205"/>
<dbReference type="Araport" id="AT4G18205"/>
<dbReference type="TAIR" id="AT4G18205">
    <property type="gene designation" value="PUP21"/>
</dbReference>
<dbReference type="eggNOG" id="ENOG502QVMQ">
    <property type="taxonomic scope" value="Eukaryota"/>
</dbReference>
<dbReference type="HOGENOM" id="CLU_043459_2_1_1"/>
<dbReference type="InParanoid" id="Q8RY74"/>
<dbReference type="OMA" id="IGFICKL"/>
<dbReference type="OrthoDB" id="1717816at2759"/>
<dbReference type="PhylomeDB" id="Q8RY74"/>
<dbReference type="PRO" id="PR:Q8RY74"/>
<dbReference type="Proteomes" id="UP000006548">
    <property type="component" value="Chromosome 4"/>
</dbReference>
<dbReference type="ExpressionAtlas" id="Q8RY74">
    <property type="expression patterns" value="baseline and differential"/>
</dbReference>
<dbReference type="GO" id="GO:0016020">
    <property type="term" value="C:membrane"/>
    <property type="evidence" value="ECO:0007669"/>
    <property type="project" value="UniProtKB-SubCell"/>
</dbReference>
<dbReference type="GO" id="GO:0005345">
    <property type="term" value="F:purine nucleobase transmembrane transporter activity"/>
    <property type="evidence" value="ECO:0007669"/>
    <property type="project" value="UniProtKB-ARBA"/>
</dbReference>
<dbReference type="GO" id="GO:0015211">
    <property type="term" value="F:purine nucleoside transmembrane transporter activity"/>
    <property type="evidence" value="ECO:0007669"/>
    <property type="project" value="InterPro"/>
</dbReference>
<dbReference type="InterPro" id="IPR030182">
    <property type="entry name" value="PUP_plant"/>
</dbReference>
<dbReference type="PANTHER" id="PTHR31376">
    <property type="entry name" value="OS09G0467300 PROTEIN-RELATED"/>
    <property type="match status" value="1"/>
</dbReference>
<dbReference type="PANTHER" id="PTHR31376:SF57">
    <property type="entry name" value="PURINE PERMEASE 22-RELATED"/>
    <property type="match status" value="1"/>
</dbReference>
<dbReference type="Pfam" id="PF16913">
    <property type="entry name" value="PUNUT"/>
    <property type="match status" value="1"/>
</dbReference>
<dbReference type="SUPFAM" id="SSF103481">
    <property type="entry name" value="Multidrug resistance efflux transporter EmrE"/>
    <property type="match status" value="1"/>
</dbReference>
<reference key="1">
    <citation type="journal article" date="1999" name="Nature">
        <title>Sequence and analysis of chromosome 4 of the plant Arabidopsis thaliana.</title>
        <authorList>
            <person name="Mayer K.F.X."/>
            <person name="Schueller C."/>
            <person name="Wambutt R."/>
            <person name="Murphy G."/>
            <person name="Volckaert G."/>
            <person name="Pohl T."/>
            <person name="Duesterhoeft A."/>
            <person name="Stiekema W."/>
            <person name="Entian K.-D."/>
            <person name="Terryn N."/>
            <person name="Harris B."/>
            <person name="Ansorge W."/>
            <person name="Brandt P."/>
            <person name="Grivell L.A."/>
            <person name="Rieger M."/>
            <person name="Weichselgartner M."/>
            <person name="de Simone V."/>
            <person name="Obermaier B."/>
            <person name="Mache R."/>
            <person name="Mueller M."/>
            <person name="Kreis M."/>
            <person name="Delseny M."/>
            <person name="Puigdomenech P."/>
            <person name="Watson M."/>
            <person name="Schmidtheini T."/>
            <person name="Reichert B."/>
            <person name="Portetelle D."/>
            <person name="Perez-Alonso M."/>
            <person name="Boutry M."/>
            <person name="Bancroft I."/>
            <person name="Vos P."/>
            <person name="Hoheisel J."/>
            <person name="Zimmermann W."/>
            <person name="Wedler H."/>
            <person name="Ridley P."/>
            <person name="Langham S.-A."/>
            <person name="McCullagh B."/>
            <person name="Bilham L."/>
            <person name="Robben J."/>
            <person name="van der Schueren J."/>
            <person name="Grymonprez B."/>
            <person name="Chuang Y.-J."/>
            <person name="Vandenbussche F."/>
            <person name="Braeken M."/>
            <person name="Weltjens I."/>
            <person name="Voet M."/>
            <person name="Bastiaens I."/>
            <person name="Aert R."/>
            <person name="Defoor E."/>
            <person name="Weitzenegger T."/>
            <person name="Bothe G."/>
            <person name="Ramsperger U."/>
            <person name="Hilbert H."/>
            <person name="Braun M."/>
            <person name="Holzer E."/>
            <person name="Brandt A."/>
            <person name="Peters S."/>
            <person name="van Staveren M."/>
            <person name="Dirkse W."/>
            <person name="Mooijman P."/>
            <person name="Klein Lankhorst R."/>
            <person name="Rose M."/>
            <person name="Hauf J."/>
            <person name="Koetter P."/>
            <person name="Berneiser S."/>
            <person name="Hempel S."/>
            <person name="Feldpausch M."/>
            <person name="Lamberth S."/>
            <person name="Van den Daele H."/>
            <person name="De Keyser A."/>
            <person name="Buysshaert C."/>
            <person name="Gielen J."/>
            <person name="Villarroel R."/>
            <person name="De Clercq R."/>
            <person name="van Montagu M."/>
            <person name="Rogers J."/>
            <person name="Cronin A."/>
            <person name="Quail M.A."/>
            <person name="Bray-Allen S."/>
            <person name="Clark L."/>
            <person name="Doggett J."/>
            <person name="Hall S."/>
            <person name="Kay M."/>
            <person name="Lennard N."/>
            <person name="McLay K."/>
            <person name="Mayes R."/>
            <person name="Pettett A."/>
            <person name="Rajandream M.A."/>
            <person name="Lyne M."/>
            <person name="Benes V."/>
            <person name="Rechmann S."/>
            <person name="Borkova D."/>
            <person name="Bloecker H."/>
            <person name="Scharfe M."/>
            <person name="Grimm M."/>
            <person name="Loehnert T.-H."/>
            <person name="Dose S."/>
            <person name="de Haan M."/>
            <person name="Maarse A.C."/>
            <person name="Schaefer M."/>
            <person name="Mueller-Auer S."/>
            <person name="Gabel C."/>
            <person name="Fuchs M."/>
            <person name="Fartmann B."/>
            <person name="Granderath K."/>
            <person name="Dauner D."/>
            <person name="Herzl A."/>
            <person name="Neumann S."/>
            <person name="Argiriou A."/>
            <person name="Vitale D."/>
            <person name="Liguori R."/>
            <person name="Piravandi E."/>
            <person name="Massenet O."/>
            <person name="Quigley F."/>
            <person name="Clabauld G."/>
            <person name="Muendlein A."/>
            <person name="Felber R."/>
            <person name="Schnabl S."/>
            <person name="Hiller R."/>
            <person name="Schmidt W."/>
            <person name="Lecharny A."/>
            <person name="Aubourg S."/>
            <person name="Chefdor F."/>
            <person name="Cooke R."/>
            <person name="Berger C."/>
            <person name="Monfort A."/>
            <person name="Casacuberta E."/>
            <person name="Gibbons T."/>
            <person name="Weber N."/>
            <person name="Vandenbol M."/>
            <person name="Bargues M."/>
            <person name="Terol J."/>
            <person name="Torres A."/>
            <person name="Perez-Perez A."/>
            <person name="Purnelle B."/>
            <person name="Bent E."/>
            <person name="Johnson S."/>
            <person name="Tacon D."/>
            <person name="Jesse T."/>
            <person name="Heijnen L."/>
            <person name="Schwarz S."/>
            <person name="Scholler P."/>
            <person name="Heber S."/>
            <person name="Francs P."/>
            <person name="Bielke C."/>
            <person name="Frishman D."/>
            <person name="Haase D."/>
            <person name="Lemcke K."/>
            <person name="Mewes H.-W."/>
            <person name="Stocker S."/>
            <person name="Zaccaria P."/>
            <person name="Bevan M."/>
            <person name="Wilson R.K."/>
            <person name="de la Bastide M."/>
            <person name="Habermann K."/>
            <person name="Parnell L."/>
            <person name="Dedhia N."/>
            <person name="Gnoj L."/>
            <person name="Schutz K."/>
            <person name="Huang E."/>
            <person name="Spiegel L."/>
            <person name="Sekhon M."/>
            <person name="Murray J."/>
            <person name="Sheet P."/>
            <person name="Cordes M."/>
            <person name="Abu-Threideh J."/>
            <person name="Stoneking T."/>
            <person name="Kalicki J."/>
            <person name="Graves T."/>
            <person name="Harmon G."/>
            <person name="Edwards J."/>
            <person name="Latreille P."/>
            <person name="Courtney L."/>
            <person name="Cloud J."/>
            <person name="Abbott A."/>
            <person name="Scott K."/>
            <person name="Johnson D."/>
            <person name="Minx P."/>
            <person name="Bentley D."/>
            <person name="Fulton B."/>
            <person name="Miller N."/>
            <person name="Greco T."/>
            <person name="Kemp K."/>
            <person name="Kramer J."/>
            <person name="Fulton L."/>
            <person name="Mardis E."/>
            <person name="Dante M."/>
            <person name="Pepin K."/>
            <person name="Hillier L.W."/>
            <person name="Nelson J."/>
            <person name="Spieth J."/>
            <person name="Ryan E."/>
            <person name="Andrews S."/>
            <person name="Geisel C."/>
            <person name="Layman D."/>
            <person name="Du H."/>
            <person name="Ali J."/>
            <person name="Berghoff A."/>
            <person name="Jones K."/>
            <person name="Drone K."/>
            <person name="Cotton M."/>
            <person name="Joshu C."/>
            <person name="Antonoiu B."/>
            <person name="Zidanic M."/>
            <person name="Strong C."/>
            <person name="Sun H."/>
            <person name="Lamar B."/>
            <person name="Yordan C."/>
            <person name="Ma P."/>
            <person name="Zhong J."/>
            <person name="Preston R."/>
            <person name="Vil D."/>
            <person name="Shekher M."/>
            <person name="Matero A."/>
            <person name="Shah R."/>
            <person name="Swaby I.K."/>
            <person name="O'Shaughnessy A."/>
            <person name="Rodriguez M."/>
            <person name="Hoffman J."/>
            <person name="Till S."/>
            <person name="Granat S."/>
            <person name="Shohdy N."/>
            <person name="Hasegawa A."/>
            <person name="Hameed A."/>
            <person name="Lodhi M."/>
            <person name="Johnson A."/>
            <person name="Chen E."/>
            <person name="Marra M.A."/>
            <person name="Martienssen R."/>
            <person name="McCombie W.R."/>
        </authorList>
    </citation>
    <scope>NUCLEOTIDE SEQUENCE [LARGE SCALE GENOMIC DNA]</scope>
    <source>
        <strain>cv. Columbia</strain>
    </source>
</reference>
<reference key="2">
    <citation type="journal article" date="2017" name="Plant J.">
        <title>Araport11: a complete reannotation of the Arabidopsis thaliana reference genome.</title>
        <authorList>
            <person name="Cheng C.Y."/>
            <person name="Krishnakumar V."/>
            <person name="Chan A.P."/>
            <person name="Thibaud-Nissen F."/>
            <person name="Schobel S."/>
            <person name="Town C.D."/>
        </authorList>
    </citation>
    <scope>GENOME REANNOTATION</scope>
    <source>
        <strain>cv. Columbia</strain>
    </source>
</reference>
<reference key="3">
    <citation type="journal article" date="2003" name="Science">
        <title>Empirical analysis of transcriptional activity in the Arabidopsis genome.</title>
        <authorList>
            <person name="Yamada K."/>
            <person name="Lim J."/>
            <person name="Dale J.M."/>
            <person name="Chen H."/>
            <person name="Shinn P."/>
            <person name="Palm C.J."/>
            <person name="Southwick A.M."/>
            <person name="Wu H.C."/>
            <person name="Kim C.J."/>
            <person name="Nguyen M."/>
            <person name="Pham P.K."/>
            <person name="Cheuk R.F."/>
            <person name="Karlin-Newmann G."/>
            <person name="Liu S.X."/>
            <person name="Lam B."/>
            <person name="Sakano H."/>
            <person name="Wu T."/>
            <person name="Yu G."/>
            <person name="Miranda M."/>
            <person name="Quach H.L."/>
            <person name="Tripp M."/>
            <person name="Chang C.H."/>
            <person name="Lee J.M."/>
            <person name="Toriumi M.J."/>
            <person name="Chan M.M."/>
            <person name="Tang C.C."/>
            <person name="Onodera C.S."/>
            <person name="Deng J.M."/>
            <person name="Akiyama K."/>
            <person name="Ansari Y."/>
            <person name="Arakawa T."/>
            <person name="Banh J."/>
            <person name="Banno F."/>
            <person name="Bowser L."/>
            <person name="Brooks S.Y."/>
            <person name="Carninci P."/>
            <person name="Chao Q."/>
            <person name="Choy N."/>
            <person name="Enju A."/>
            <person name="Goldsmith A.D."/>
            <person name="Gurjal M."/>
            <person name="Hansen N.F."/>
            <person name="Hayashizaki Y."/>
            <person name="Johnson-Hopson C."/>
            <person name="Hsuan V.W."/>
            <person name="Iida K."/>
            <person name="Karnes M."/>
            <person name="Khan S."/>
            <person name="Koesema E."/>
            <person name="Ishida J."/>
            <person name="Jiang P.X."/>
            <person name="Jones T."/>
            <person name="Kawai J."/>
            <person name="Kamiya A."/>
            <person name="Meyers C."/>
            <person name="Nakajima M."/>
            <person name="Narusaka M."/>
            <person name="Seki M."/>
            <person name="Sakurai T."/>
            <person name="Satou M."/>
            <person name="Tamse R."/>
            <person name="Vaysberg M."/>
            <person name="Wallender E.K."/>
            <person name="Wong C."/>
            <person name="Yamamura Y."/>
            <person name="Yuan S."/>
            <person name="Shinozaki K."/>
            <person name="Davis R.W."/>
            <person name="Theologis A."/>
            <person name="Ecker J.R."/>
        </authorList>
    </citation>
    <scope>NUCLEOTIDE SEQUENCE [LARGE SCALE MRNA]</scope>
    <source>
        <strain>cv. Columbia</strain>
    </source>
</reference>
<reference key="4">
    <citation type="journal article" date="2000" name="Plant Cell">
        <title>A new family of high-affinity transporters for adenine, cytosine, and purine derivatives in Arabidopsis.</title>
        <authorList>
            <person name="Gillissen B."/>
            <person name="Buerkle L."/>
            <person name="Andre B."/>
            <person name="Kuehn C."/>
            <person name="Rentsch D."/>
            <person name="Brandl B."/>
            <person name="Frommer W.B."/>
        </authorList>
    </citation>
    <scope>GENE FAMILY</scope>
    <scope>NOMENCLATURE</scope>
</reference>
<evidence type="ECO:0000255" key="1"/>
<evidence type="ECO:0000305" key="2"/>
<keyword id="KW-0472">Membrane</keyword>
<keyword id="KW-1185">Reference proteome</keyword>
<keyword id="KW-0812">Transmembrane</keyword>
<keyword id="KW-1133">Transmembrane helix</keyword>
<keyword id="KW-0813">Transport</keyword>